<name>MURD_CLOBL</name>
<protein>
    <recommendedName>
        <fullName evidence="1">UDP-N-acetylmuramoylalanine--D-glutamate ligase</fullName>
        <ecNumber evidence="1">6.3.2.9</ecNumber>
    </recommendedName>
    <alternativeName>
        <fullName evidence="1">D-glutamic acid-adding enzyme</fullName>
    </alternativeName>
    <alternativeName>
        <fullName evidence="1">UDP-N-acetylmuramoyl-L-alanyl-D-glutamate synthetase</fullName>
    </alternativeName>
</protein>
<organism>
    <name type="scientific">Clostridium botulinum (strain Langeland / NCTC 10281 / Type F)</name>
    <dbReference type="NCBI Taxonomy" id="441772"/>
    <lineage>
        <taxon>Bacteria</taxon>
        <taxon>Bacillati</taxon>
        <taxon>Bacillota</taxon>
        <taxon>Clostridia</taxon>
        <taxon>Eubacteriales</taxon>
        <taxon>Clostridiaceae</taxon>
        <taxon>Clostridium</taxon>
    </lineage>
</organism>
<proteinExistence type="inferred from homology"/>
<sequence length="458" mass="51533">MKSNFSKFKDFIKYKKVAVVGIGVSNRPLIKFLVKLGAKVTAFDKKHREKLGSISLELEEIGVDLVLGENYLDKLDGYDVIFKTPSMRIDRPEFVKAKESGAYITSEMEEFIKYCPAKVFGITGSDGKTTTTTLVYEMLKKEGYRTWVGGNIGTPLFANIEEMKEDHMVVLELSSFQLMTMDVSPEISLITNLSPNHLDVHKDFEEYVWAKKNIFKYQSSNNLLVLNKDDDLTNEMENEALGDVLKFSLVEKVYNGACLSNNKLTIQGKEVCDSKDINLKGRHNIANLLAAFCMVNKYVSIDSMKYVATNFSGVEHRCEFIREVNGVKYYNDSIASSPSRTLAGLNSFEKPVILIAGGYDKKIPFEPLAEGGYDKIKILILMGDTKNKIKSAFEKVISHKKCEMEIVIVNSMEEAVKVADNIAEKGDIITLSPACASFDMYPNFEIRGNEFKNIVNRL</sequence>
<evidence type="ECO:0000255" key="1">
    <source>
        <dbReference type="HAMAP-Rule" id="MF_00639"/>
    </source>
</evidence>
<feature type="chain" id="PRO_1000056882" description="UDP-N-acetylmuramoylalanine--D-glutamate ligase">
    <location>
        <begin position="1"/>
        <end position="458"/>
    </location>
</feature>
<feature type="binding site" evidence="1">
    <location>
        <begin position="124"/>
        <end position="130"/>
    </location>
    <ligand>
        <name>ATP</name>
        <dbReference type="ChEBI" id="CHEBI:30616"/>
    </ligand>
</feature>
<keyword id="KW-0067">ATP-binding</keyword>
<keyword id="KW-0131">Cell cycle</keyword>
<keyword id="KW-0132">Cell division</keyword>
<keyword id="KW-0133">Cell shape</keyword>
<keyword id="KW-0961">Cell wall biogenesis/degradation</keyword>
<keyword id="KW-0963">Cytoplasm</keyword>
<keyword id="KW-0436">Ligase</keyword>
<keyword id="KW-0547">Nucleotide-binding</keyword>
<keyword id="KW-0573">Peptidoglycan synthesis</keyword>
<gene>
    <name evidence="1" type="primary">murD</name>
    <name type="ordered locus">CLI_3724</name>
</gene>
<comment type="function">
    <text evidence="1">Cell wall formation. Catalyzes the addition of glutamate to the nucleotide precursor UDP-N-acetylmuramoyl-L-alanine (UMA).</text>
</comment>
<comment type="catalytic activity">
    <reaction evidence="1">
        <text>UDP-N-acetyl-alpha-D-muramoyl-L-alanine + D-glutamate + ATP = UDP-N-acetyl-alpha-D-muramoyl-L-alanyl-D-glutamate + ADP + phosphate + H(+)</text>
        <dbReference type="Rhea" id="RHEA:16429"/>
        <dbReference type="ChEBI" id="CHEBI:15378"/>
        <dbReference type="ChEBI" id="CHEBI:29986"/>
        <dbReference type="ChEBI" id="CHEBI:30616"/>
        <dbReference type="ChEBI" id="CHEBI:43474"/>
        <dbReference type="ChEBI" id="CHEBI:83898"/>
        <dbReference type="ChEBI" id="CHEBI:83900"/>
        <dbReference type="ChEBI" id="CHEBI:456216"/>
        <dbReference type="EC" id="6.3.2.9"/>
    </reaction>
</comment>
<comment type="pathway">
    <text evidence="1">Cell wall biogenesis; peptidoglycan biosynthesis.</text>
</comment>
<comment type="subcellular location">
    <subcellularLocation>
        <location evidence="1">Cytoplasm</location>
    </subcellularLocation>
</comment>
<comment type="similarity">
    <text evidence="1">Belongs to the MurCDEF family.</text>
</comment>
<accession>A7GJB0</accession>
<dbReference type="EC" id="6.3.2.9" evidence="1"/>
<dbReference type="EMBL" id="CP000728">
    <property type="protein sequence ID" value="ABS41699.1"/>
    <property type="molecule type" value="Genomic_DNA"/>
</dbReference>
<dbReference type="RefSeq" id="WP_012101150.1">
    <property type="nucleotide sequence ID" value="NC_009699.1"/>
</dbReference>
<dbReference type="SMR" id="A7GJB0"/>
<dbReference type="KEGG" id="cbf:CLI_3724"/>
<dbReference type="HOGENOM" id="CLU_032540_0_1_9"/>
<dbReference type="UniPathway" id="UPA00219"/>
<dbReference type="Proteomes" id="UP000002410">
    <property type="component" value="Chromosome"/>
</dbReference>
<dbReference type="GO" id="GO:0005737">
    <property type="term" value="C:cytoplasm"/>
    <property type="evidence" value="ECO:0007669"/>
    <property type="project" value="UniProtKB-SubCell"/>
</dbReference>
<dbReference type="GO" id="GO:0005524">
    <property type="term" value="F:ATP binding"/>
    <property type="evidence" value="ECO:0007669"/>
    <property type="project" value="UniProtKB-UniRule"/>
</dbReference>
<dbReference type="GO" id="GO:0008764">
    <property type="term" value="F:UDP-N-acetylmuramoylalanine-D-glutamate ligase activity"/>
    <property type="evidence" value="ECO:0007669"/>
    <property type="project" value="UniProtKB-UniRule"/>
</dbReference>
<dbReference type="GO" id="GO:0051301">
    <property type="term" value="P:cell division"/>
    <property type="evidence" value="ECO:0007669"/>
    <property type="project" value="UniProtKB-KW"/>
</dbReference>
<dbReference type="GO" id="GO:0071555">
    <property type="term" value="P:cell wall organization"/>
    <property type="evidence" value="ECO:0007669"/>
    <property type="project" value="UniProtKB-KW"/>
</dbReference>
<dbReference type="GO" id="GO:0009252">
    <property type="term" value="P:peptidoglycan biosynthetic process"/>
    <property type="evidence" value="ECO:0007669"/>
    <property type="project" value="UniProtKB-UniRule"/>
</dbReference>
<dbReference type="GO" id="GO:0008360">
    <property type="term" value="P:regulation of cell shape"/>
    <property type="evidence" value="ECO:0007669"/>
    <property type="project" value="UniProtKB-KW"/>
</dbReference>
<dbReference type="Gene3D" id="3.90.190.20">
    <property type="entry name" value="Mur ligase, C-terminal domain"/>
    <property type="match status" value="1"/>
</dbReference>
<dbReference type="Gene3D" id="3.40.1190.10">
    <property type="entry name" value="Mur-like, catalytic domain"/>
    <property type="match status" value="1"/>
</dbReference>
<dbReference type="Gene3D" id="3.40.50.720">
    <property type="entry name" value="NAD(P)-binding Rossmann-like Domain"/>
    <property type="match status" value="1"/>
</dbReference>
<dbReference type="HAMAP" id="MF_00639">
    <property type="entry name" value="MurD"/>
    <property type="match status" value="1"/>
</dbReference>
<dbReference type="InterPro" id="IPR036565">
    <property type="entry name" value="Mur-like_cat_sf"/>
</dbReference>
<dbReference type="InterPro" id="IPR004101">
    <property type="entry name" value="Mur_ligase_C"/>
</dbReference>
<dbReference type="InterPro" id="IPR036615">
    <property type="entry name" value="Mur_ligase_C_dom_sf"/>
</dbReference>
<dbReference type="InterPro" id="IPR013221">
    <property type="entry name" value="Mur_ligase_cen"/>
</dbReference>
<dbReference type="InterPro" id="IPR005762">
    <property type="entry name" value="MurD"/>
</dbReference>
<dbReference type="NCBIfam" id="TIGR01087">
    <property type="entry name" value="murD"/>
    <property type="match status" value="1"/>
</dbReference>
<dbReference type="PANTHER" id="PTHR43692">
    <property type="entry name" value="UDP-N-ACETYLMURAMOYLALANINE--D-GLUTAMATE LIGASE"/>
    <property type="match status" value="1"/>
</dbReference>
<dbReference type="PANTHER" id="PTHR43692:SF1">
    <property type="entry name" value="UDP-N-ACETYLMURAMOYLALANINE--D-GLUTAMATE LIGASE"/>
    <property type="match status" value="1"/>
</dbReference>
<dbReference type="Pfam" id="PF02875">
    <property type="entry name" value="Mur_ligase_C"/>
    <property type="match status" value="1"/>
</dbReference>
<dbReference type="Pfam" id="PF08245">
    <property type="entry name" value="Mur_ligase_M"/>
    <property type="match status" value="1"/>
</dbReference>
<dbReference type="Pfam" id="PF21799">
    <property type="entry name" value="MurD-like_N"/>
    <property type="match status" value="1"/>
</dbReference>
<dbReference type="SUPFAM" id="SSF51984">
    <property type="entry name" value="MurCD N-terminal domain"/>
    <property type="match status" value="1"/>
</dbReference>
<dbReference type="SUPFAM" id="SSF53623">
    <property type="entry name" value="MurD-like peptide ligases, catalytic domain"/>
    <property type="match status" value="1"/>
</dbReference>
<dbReference type="SUPFAM" id="SSF53244">
    <property type="entry name" value="MurD-like peptide ligases, peptide-binding domain"/>
    <property type="match status" value="1"/>
</dbReference>
<reference key="1">
    <citation type="submission" date="2007-06" db="EMBL/GenBank/DDBJ databases">
        <authorList>
            <person name="Brinkac L.M."/>
            <person name="Daugherty S."/>
            <person name="Dodson R.J."/>
            <person name="Madupu R."/>
            <person name="Brown J.L."/>
            <person name="Bruce D."/>
            <person name="Detter C."/>
            <person name="Munk C."/>
            <person name="Smith L.A."/>
            <person name="Smith T.J."/>
            <person name="White O."/>
            <person name="Brettin T.S."/>
        </authorList>
    </citation>
    <scope>NUCLEOTIDE SEQUENCE [LARGE SCALE GENOMIC DNA]</scope>
    <source>
        <strain>Langeland / NCTC 10281 / Type F</strain>
    </source>
</reference>